<gene>
    <name type="primary">sarX</name>
    <name type="ordered locus">SAR0679</name>
</gene>
<sequence length="119" mass="14180">MNTEKLETLLGFYKQYKALSEYIDKKYKLSLNDLAVLDLTMKHCKDEKVLMQSFLKTAMDELDLSRTKLLVSIRRLIEKERLSKVRSSKDERKIYIYLNDDDISKFNALFEDVEQFLNI</sequence>
<protein>
    <recommendedName>
        <fullName>HTH-type transcriptional regulator SarX</fullName>
    </recommendedName>
    <alternativeName>
        <fullName>Staphylococcal accessory regulator X</fullName>
    </alternativeName>
</protein>
<evidence type="ECO:0000250" key="1"/>
<evidence type="ECO:0000255" key="2"/>
<evidence type="ECO:0000305" key="3"/>
<name>SARX_STAAR</name>
<comment type="function">
    <text evidence="1">Involved in the regulation of virulence genes. Acts as a repressor of the agr locus and consequently targets genes regulated by the agr system such as sspA, hla and hlb. Binds directly to the agr promoter region (By similarity).</text>
</comment>
<comment type="subcellular location">
    <subcellularLocation>
        <location evidence="1">Cytoplasm</location>
    </subcellularLocation>
</comment>
<comment type="similarity">
    <text evidence="3">Belongs to the SarA family.</text>
</comment>
<comment type="sequence caution" evidence="3">
    <conflict type="erroneous initiation">
        <sequence resource="EMBL-CDS" id="CAG39695"/>
    </conflict>
</comment>
<feature type="chain" id="PRO_0000259142" description="HTH-type transcriptional regulator SarX">
    <location>
        <begin position="1"/>
        <end position="119"/>
    </location>
</feature>
<feature type="DNA-binding region" description="H-T-H motif" evidence="2">
    <location>
        <begin position="55"/>
        <end position="78"/>
    </location>
</feature>
<accession>Q6GJ03</accession>
<organism>
    <name type="scientific">Staphylococcus aureus (strain MRSA252)</name>
    <dbReference type="NCBI Taxonomy" id="282458"/>
    <lineage>
        <taxon>Bacteria</taxon>
        <taxon>Bacillati</taxon>
        <taxon>Bacillota</taxon>
        <taxon>Bacilli</taxon>
        <taxon>Bacillales</taxon>
        <taxon>Staphylococcaceae</taxon>
        <taxon>Staphylococcus</taxon>
    </lineage>
</organism>
<proteinExistence type="inferred from homology"/>
<dbReference type="EMBL" id="BX571856">
    <property type="protein sequence ID" value="CAG39695.1"/>
    <property type="status" value="ALT_INIT"/>
    <property type="molecule type" value="Genomic_DNA"/>
</dbReference>
<dbReference type="RefSeq" id="WP_001090984.1">
    <property type="nucleotide sequence ID" value="NC_002952.2"/>
</dbReference>
<dbReference type="SMR" id="Q6GJ03"/>
<dbReference type="KEGG" id="sar:SAR0679"/>
<dbReference type="HOGENOM" id="CLU_166896_0_0_9"/>
<dbReference type="Proteomes" id="UP000000596">
    <property type="component" value="Chromosome"/>
</dbReference>
<dbReference type="GO" id="GO:0005737">
    <property type="term" value="C:cytoplasm"/>
    <property type="evidence" value="ECO:0007669"/>
    <property type="project" value="UniProtKB-SubCell"/>
</dbReference>
<dbReference type="GO" id="GO:0003677">
    <property type="term" value="F:DNA binding"/>
    <property type="evidence" value="ECO:0007669"/>
    <property type="project" value="UniProtKB-KW"/>
</dbReference>
<dbReference type="GO" id="GO:0006355">
    <property type="term" value="P:regulation of DNA-templated transcription"/>
    <property type="evidence" value="ECO:0007669"/>
    <property type="project" value="InterPro"/>
</dbReference>
<dbReference type="Gene3D" id="1.10.10.10">
    <property type="entry name" value="Winged helix-like DNA-binding domain superfamily/Winged helix DNA-binding domain"/>
    <property type="match status" value="1"/>
</dbReference>
<dbReference type="InterPro" id="IPR010166">
    <property type="entry name" value="SarA/Rot_dom"/>
</dbReference>
<dbReference type="InterPro" id="IPR055166">
    <property type="entry name" value="Transc_reg_Sar_Rot_HTH"/>
</dbReference>
<dbReference type="InterPro" id="IPR036388">
    <property type="entry name" value="WH-like_DNA-bd_sf"/>
</dbReference>
<dbReference type="InterPro" id="IPR036390">
    <property type="entry name" value="WH_DNA-bd_sf"/>
</dbReference>
<dbReference type="NCBIfam" id="TIGR01889">
    <property type="entry name" value="Staph_reg_Sar"/>
    <property type="match status" value="1"/>
</dbReference>
<dbReference type="Pfam" id="PF22381">
    <property type="entry name" value="Staph_reg_Sar_Rot"/>
    <property type="match status" value="1"/>
</dbReference>
<dbReference type="SUPFAM" id="SSF46785">
    <property type="entry name" value="Winged helix' DNA-binding domain"/>
    <property type="match status" value="1"/>
</dbReference>
<reference key="1">
    <citation type="journal article" date="2004" name="Proc. Natl. Acad. Sci. U.S.A.">
        <title>Complete genomes of two clinical Staphylococcus aureus strains: evidence for the rapid evolution of virulence and drug resistance.</title>
        <authorList>
            <person name="Holden M.T.G."/>
            <person name="Feil E.J."/>
            <person name="Lindsay J.A."/>
            <person name="Peacock S.J."/>
            <person name="Day N.P.J."/>
            <person name="Enright M.C."/>
            <person name="Foster T.J."/>
            <person name="Moore C.E."/>
            <person name="Hurst L."/>
            <person name="Atkin R."/>
            <person name="Barron A."/>
            <person name="Bason N."/>
            <person name="Bentley S.D."/>
            <person name="Chillingworth C."/>
            <person name="Chillingworth T."/>
            <person name="Churcher C."/>
            <person name="Clark L."/>
            <person name="Corton C."/>
            <person name="Cronin A."/>
            <person name="Doggett J."/>
            <person name="Dowd L."/>
            <person name="Feltwell T."/>
            <person name="Hance Z."/>
            <person name="Harris B."/>
            <person name="Hauser H."/>
            <person name="Holroyd S."/>
            <person name="Jagels K."/>
            <person name="James K.D."/>
            <person name="Lennard N."/>
            <person name="Line A."/>
            <person name="Mayes R."/>
            <person name="Moule S."/>
            <person name="Mungall K."/>
            <person name="Ormond D."/>
            <person name="Quail M.A."/>
            <person name="Rabbinowitsch E."/>
            <person name="Rutherford K.M."/>
            <person name="Sanders M."/>
            <person name="Sharp S."/>
            <person name="Simmonds M."/>
            <person name="Stevens K."/>
            <person name="Whitehead S."/>
            <person name="Barrell B.G."/>
            <person name="Spratt B.G."/>
            <person name="Parkhill J."/>
        </authorList>
    </citation>
    <scope>NUCLEOTIDE SEQUENCE [LARGE SCALE GENOMIC DNA]</scope>
    <source>
        <strain>MRSA252</strain>
    </source>
</reference>
<keyword id="KW-0963">Cytoplasm</keyword>
<keyword id="KW-0238">DNA-binding</keyword>
<keyword id="KW-0678">Repressor</keyword>
<keyword id="KW-0804">Transcription</keyword>
<keyword id="KW-0805">Transcription regulation</keyword>
<keyword id="KW-0843">Virulence</keyword>